<name>FRSA_SERP5</name>
<keyword id="KW-0378">Hydrolase</keyword>
<keyword id="KW-0719">Serine esterase</keyword>
<reference key="1">
    <citation type="submission" date="2007-09" db="EMBL/GenBank/DDBJ databases">
        <title>Complete sequence of chromosome of Serratia proteamaculans 568.</title>
        <authorList>
            <consortium name="US DOE Joint Genome Institute"/>
            <person name="Copeland A."/>
            <person name="Lucas S."/>
            <person name="Lapidus A."/>
            <person name="Barry K."/>
            <person name="Glavina del Rio T."/>
            <person name="Dalin E."/>
            <person name="Tice H."/>
            <person name="Pitluck S."/>
            <person name="Chain P."/>
            <person name="Malfatti S."/>
            <person name="Shin M."/>
            <person name="Vergez L."/>
            <person name="Schmutz J."/>
            <person name="Larimer F."/>
            <person name="Land M."/>
            <person name="Hauser L."/>
            <person name="Kyrpides N."/>
            <person name="Kim E."/>
            <person name="Taghavi S."/>
            <person name="Newman L."/>
            <person name="Vangronsveld J."/>
            <person name="van der Lelie D."/>
            <person name="Richardson P."/>
        </authorList>
    </citation>
    <scope>NUCLEOTIDE SEQUENCE [LARGE SCALE GENOMIC DNA]</scope>
    <source>
        <strain>568</strain>
    </source>
</reference>
<comment type="function">
    <text evidence="1">Catalyzes the hydrolysis of esters.</text>
</comment>
<comment type="catalytic activity">
    <reaction evidence="1">
        <text>a carboxylic ester + H2O = an alcohol + a carboxylate + H(+)</text>
        <dbReference type="Rhea" id="RHEA:21164"/>
        <dbReference type="ChEBI" id="CHEBI:15377"/>
        <dbReference type="ChEBI" id="CHEBI:15378"/>
        <dbReference type="ChEBI" id="CHEBI:29067"/>
        <dbReference type="ChEBI" id="CHEBI:30879"/>
        <dbReference type="ChEBI" id="CHEBI:33308"/>
        <dbReference type="EC" id="3.1.1.1"/>
    </reaction>
</comment>
<comment type="similarity">
    <text evidence="1">Belongs to the FrsA family.</text>
</comment>
<feature type="chain" id="PRO_1000064487" description="Esterase FrsA">
    <location>
        <begin position="1"/>
        <end position="415"/>
    </location>
</feature>
<protein>
    <recommendedName>
        <fullName evidence="1">Esterase FrsA</fullName>
        <ecNumber evidence="1">3.1.1.1</ecNumber>
    </recommendedName>
</protein>
<sequence length="415" mass="47130">MAQANLSEILFKPSFKHPETSTLVLRARSKISAELHSTLEGNTVSNWYRMLNPLLWAWRGVDPIEINEVLARIAVADVEHTNDKWLDTVVGYRNGNWIYEWVHQGMLWQQRALEQQDPLTGGQYWLNAANFYSIAGYPHLKGDELAEQAEALSNRAYEEAALLLPYQLKELEFRIEGGSSITGFLHLPEKGEAPFPTVLMCGSLDTLQTDYHRLFRDYLAPHGIAMLTIDMPSIGSSYKWKLTQDSSFLHQQVLTQLTTVPWIDHQRVTAFGFRFGANVAVRLAYLEPQRLRGVACLGPVVHRLLCDSSTQKHVPDMYMDVLASRMGMANASDHVLKVELNSYSLKTQGLLGRRCPTPMLAGYWEQDPLSPKEESQLIVSSSMDGKLIAIPRKPVYSSFHKALLQMSHWMKDKMR</sequence>
<proteinExistence type="inferred from homology"/>
<organism>
    <name type="scientific">Serratia proteamaculans (strain 568)</name>
    <dbReference type="NCBI Taxonomy" id="399741"/>
    <lineage>
        <taxon>Bacteria</taxon>
        <taxon>Pseudomonadati</taxon>
        <taxon>Pseudomonadota</taxon>
        <taxon>Gammaproteobacteria</taxon>
        <taxon>Enterobacterales</taxon>
        <taxon>Yersiniaceae</taxon>
        <taxon>Serratia</taxon>
    </lineage>
</organism>
<gene>
    <name evidence="1" type="primary">frsA</name>
    <name type="ordered locus">Spro_0965</name>
</gene>
<accession>A8GAD1</accession>
<dbReference type="EC" id="3.1.1.1" evidence="1"/>
<dbReference type="EMBL" id="CP000826">
    <property type="protein sequence ID" value="ABV40071.1"/>
    <property type="molecule type" value="Genomic_DNA"/>
</dbReference>
<dbReference type="SMR" id="A8GAD1"/>
<dbReference type="STRING" id="399741.Spro_0965"/>
<dbReference type="ESTHER" id="serp5-y965">
    <property type="family name" value="Duf_1100-R"/>
</dbReference>
<dbReference type="KEGG" id="spe:Spro_0965"/>
<dbReference type="eggNOG" id="COG1073">
    <property type="taxonomic scope" value="Bacteria"/>
</dbReference>
<dbReference type="HOGENOM" id="CLU_036819_0_0_6"/>
<dbReference type="OrthoDB" id="5590073at2"/>
<dbReference type="GO" id="GO:0106435">
    <property type="term" value="F:carboxylesterase activity"/>
    <property type="evidence" value="ECO:0007669"/>
    <property type="project" value="UniProtKB-EC"/>
</dbReference>
<dbReference type="Gene3D" id="3.40.50.1820">
    <property type="entry name" value="alpha/beta hydrolase"/>
    <property type="match status" value="1"/>
</dbReference>
<dbReference type="HAMAP" id="MF_01063">
    <property type="entry name" value="FrsA"/>
    <property type="match status" value="1"/>
</dbReference>
<dbReference type="InterPro" id="IPR029058">
    <property type="entry name" value="AB_hydrolase_fold"/>
</dbReference>
<dbReference type="InterPro" id="IPR043423">
    <property type="entry name" value="FrsA"/>
</dbReference>
<dbReference type="InterPro" id="IPR010520">
    <property type="entry name" value="FrsA-like"/>
</dbReference>
<dbReference type="InterPro" id="IPR050261">
    <property type="entry name" value="FrsA_esterase"/>
</dbReference>
<dbReference type="NCBIfam" id="NF003460">
    <property type="entry name" value="PRK05077.1"/>
    <property type="match status" value="1"/>
</dbReference>
<dbReference type="PANTHER" id="PTHR22946">
    <property type="entry name" value="DIENELACTONE HYDROLASE DOMAIN-CONTAINING PROTEIN-RELATED"/>
    <property type="match status" value="1"/>
</dbReference>
<dbReference type="PANTHER" id="PTHR22946:SF4">
    <property type="entry name" value="ESTERASE FRSA"/>
    <property type="match status" value="1"/>
</dbReference>
<dbReference type="Pfam" id="PF06500">
    <property type="entry name" value="FrsA-like"/>
    <property type="match status" value="1"/>
</dbReference>
<dbReference type="SUPFAM" id="SSF53474">
    <property type="entry name" value="alpha/beta-Hydrolases"/>
    <property type="match status" value="1"/>
</dbReference>
<evidence type="ECO:0000255" key="1">
    <source>
        <dbReference type="HAMAP-Rule" id="MF_01063"/>
    </source>
</evidence>